<name>UNC50_DICDI</name>
<feature type="chain" id="PRO_0000327856" description="Protein unc-50 homolog">
    <location>
        <begin position="1"/>
        <end position="261"/>
    </location>
</feature>
<feature type="transmembrane region" description="Helical" evidence="1">
    <location>
        <begin position="37"/>
        <end position="57"/>
    </location>
</feature>
<feature type="transmembrane region" description="Helical" evidence="1">
    <location>
        <begin position="82"/>
        <end position="102"/>
    </location>
</feature>
<feature type="transmembrane region" description="Helical" evidence="1">
    <location>
        <begin position="113"/>
        <end position="133"/>
    </location>
</feature>
<feature type="transmembrane region" description="Helical" evidence="1">
    <location>
        <begin position="166"/>
        <end position="186"/>
    </location>
</feature>
<feature type="transmembrane region" description="Helical" evidence="1">
    <location>
        <begin position="190"/>
        <end position="210"/>
    </location>
</feature>
<feature type="transmembrane region" description="Helical" evidence="1">
    <location>
        <begin position="225"/>
        <end position="245"/>
    </location>
</feature>
<evidence type="ECO:0000255" key="1"/>
<evidence type="ECO:0000305" key="2"/>
<keyword id="KW-0472">Membrane</keyword>
<keyword id="KW-1185">Reference proteome</keyword>
<keyword id="KW-0812">Transmembrane</keyword>
<keyword id="KW-1133">Transmembrane helix</keyword>
<accession>Q54DD7</accession>
<comment type="subcellular location">
    <subcellularLocation>
        <location evidence="2">Membrane</location>
        <topology evidence="2">Multi-pass membrane protein</topology>
    </subcellularLocation>
</comment>
<comment type="similarity">
    <text evidence="2">Belongs to the unc-50 family.</text>
</comment>
<sequence>MLPISYTNLNSSRITRDGTASSASRYRRLIPEYFRRIFHYPQMDIEYTFWIMFYLCFNPSRVYRVTSWHKQTKNQWARDDPAFAVILVFFMAIASMSYAITFHFLSFLNVIKVMFWAVFVDFITVGLLIATIGWWVTNKFLRVSVHNHSVDQSVEWLYAFDIHCNSFFPLFIILYVVQFFLLPILLSNSLFAAILSNTLYIIGFSYYYYVTFLGYNALPFLQHTVVFLYPIGILFALYIVSVVMGKNLTVSIINFYFGFQL</sequence>
<organism>
    <name type="scientific">Dictyostelium discoideum</name>
    <name type="common">Social amoeba</name>
    <dbReference type="NCBI Taxonomy" id="44689"/>
    <lineage>
        <taxon>Eukaryota</taxon>
        <taxon>Amoebozoa</taxon>
        <taxon>Evosea</taxon>
        <taxon>Eumycetozoa</taxon>
        <taxon>Dictyostelia</taxon>
        <taxon>Dictyosteliales</taxon>
        <taxon>Dictyosteliaceae</taxon>
        <taxon>Dictyostelium</taxon>
    </lineage>
</organism>
<protein>
    <recommendedName>
        <fullName>Protein unc-50 homolog</fullName>
    </recommendedName>
</protein>
<reference key="1">
    <citation type="journal article" date="2005" name="Nature">
        <title>The genome of the social amoeba Dictyostelium discoideum.</title>
        <authorList>
            <person name="Eichinger L."/>
            <person name="Pachebat J.A."/>
            <person name="Gloeckner G."/>
            <person name="Rajandream M.A."/>
            <person name="Sucgang R."/>
            <person name="Berriman M."/>
            <person name="Song J."/>
            <person name="Olsen R."/>
            <person name="Szafranski K."/>
            <person name="Xu Q."/>
            <person name="Tunggal B."/>
            <person name="Kummerfeld S."/>
            <person name="Madera M."/>
            <person name="Konfortov B.A."/>
            <person name="Rivero F."/>
            <person name="Bankier A.T."/>
            <person name="Lehmann R."/>
            <person name="Hamlin N."/>
            <person name="Davies R."/>
            <person name="Gaudet P."/>
            <person name="Fey P."/>
            <person name="Pilcher K."/>
            <person name="Chen G."/>
            <person name="Saunders D."/>
            <person name="Sodergren E.J."/>
            <person name="Davis P."/>
            <person name="Kerhornou A."/>
            <person name="Nie X."/>
            <person name="Hall N."/>
            <person name="Anjard C."/>
            <person name="Hemphill L."/>
            <person name="Bason N."/>
            <person name="Farbrother P."/>
            <person name="Desany B."/>
            <person name="Just E."/>
            <person name="Morio T."/>
            <person name="Rost R."/>
            <person name="Churcher C.M."/>
            <person name="Cooper J."/>
            <person name="Haydock S."/>
            <person name="van Driessche N."/>
            <person name="Cronin A."/>
            <person name="Goodhead I."/>
            <person name="Muzny D.M."/>
            <person name="Mourier T."/>
            <person name="Pain A."/>
            <person name="Lu M."/>
            <person name="Harper D."/>
            <person name="Lindsay R."/>
            <person name="Hauser H."/>
            <person name="James K.D."/>
            <person name="Quiles M."/>
            <person name="Madan Babu M."/>
            <person name="Saito T."/>
            <person name="Buchrieser C."/>
            <person name="Wardroper A."/>
            <person name="Felder M."/>
            <person name="Thangavelu M."/>
            <person name="Johnson D."/>
            <person name="Knights A."/>
            <person name="Loulseged H."/>
            <person name="Mungall K.L."/>
            <person name="Oliver K."/>
            <person name="Price C."/>
            <person name="Quail M.A."/>
            <person name="Urushihara H."/>
            <person name="Hernandez J."/>
            <person name="Rabbinowitsch E."/>
            <person name="Steffen D."/>
            <person name="Sanders M."/>
            <person name="Ma J."/>
            <person name="Kohara Y."/>
            <person name="Sharp S."/>
            <person name="Simmonds M.N."/>
            <person name="Spiegler S."/>
            <person name="Tivey A."/>
            <person name="Sugano S."/>
            <person name="White B."/>
            <person name="Walker D."/>
            <person name="Woodward J.R."/>
            <person name="Winckler T."/>
            <person name="Tanaka Y."/>
            <person name="Shaulsky G."/>
            <person name="Schleicher M."/>
            <person name="Weinstock G.M."/>
            <person name="Rosenthal A."/>
            <person name="Cox E.C."/>
            <person name="Chisholm R.L."/>
            <person name="Gibbs R.A."/>
            <person name="Loomis W.F."/>
            <person name="Platzer M."/>
            <person name="Kay R.R."/>
            <person name="Williams J.G."/>
            <person name="Dear P.H."/>
            <person name="Noegel A.A."/>
            <person name="Barrell B.G."/>
            <person name="Kuspa A."/>
        </authorList>
    </citation>
    <scope>NUCLEOTIDE SEQUENCE [LARGE SCALE GENOMIC DNA]</scope>
    <source>
        <strain>AX4</strain>
    </source>
</reference>
<gene>
    <name type="ORF">DDB_G0292320</name>
</gene>
<dbReference type="EMBL" id="AAFI02000189">
    <property type="protein sequence ID" value="EAL61284.1"/>
    <property type="molecule type" value="Genomic_DNA"/>
</dbReference>
<dbReference type="RefSeq" id="XP_629704.1">
    <property type="nucleotide sequence ID" value="XM_629702.1"/>
</dbReference>
<dbReference type="FunCoup" id="Q54DD7">
    <property type="interactions" value="796"/>
</dbReference>
<dbReference type="PaxDb" id="44689-DDB0266485"/>
<dbReference type="EnsemblProtists" id="EAL61284">
    <property type="protein sequence ID" value="EAL61284"/>
    <property type="gene ID" value="DDB_G0292320"/>
</dbReference>
<dbReference type="GeneID" id="8628618"/>
<dbReference type="KEGG" id="ddi:DDB_G0292320"/>
<dbReference type="dictyBase" id="DDB_G0292320"/>
<dbReference type="VEuPathDB" id="AmoebaDB:DDB_G0292320"/>
<dbReference type="eggNOG" id="KOG3012">
    <property type="taxonomic scope" value="Eukaryota"/>
</dbReference>
<dbReference type="HOGENOM" id="CLU_066239_1_0_1"/>
<dbReference type="InParanoid" id="Q54DD7"/>
<dbReference type="OMA" id="YRNFMYR"/>
<dbReference type="PhylomeDB" id="Q54DD7"/>
<dbReference type="PRO" id="PR:Q54DD7"/>
<dbReference type="Proteomes" id="UP000002195">
    <property type="component" value="Chromosome 6"/>
</dbReference>
<dbReference type="GO" id="GO:0000139">
    <property type="term" value="C:Golgi membrane"/>
    <property type="evidence" value="ECO:0000318"/>
    <property type="project" value="GO_Central"/>
</dbReference>
<dbReference type="InterPro" id="IPR007881">
    <property type="entry name" value="UNC-50"/>
</dbReference>
<dbReference type="PANTHER" id="PTHR12841">
    <property type="entry name" value="PROTEIN UNC-50 HOMOLOG"/>
    <property type="match status" value="1"/>
</dbReference>
<dbReference type="PANTHER" id="PTHR12841:SF6">
    <property type="entry name" value="PROTEIN UNC-50 HOMOLOG"/>
    <property type="match status" value="1"/>
</dbReference>
<dbReference type="Pfam" id="PF05216">
    <property type="entry name" value="UNC-50"/>
    <property type="match status" value="1"/>
</dbReference>
<proteinExistence type="inferred from homology"/>